<comment type="catalytic activity">
    <reaction evidence="6">
        <text>S-ubiquitinyl-[E2 ubiquitin-conjugating enzyme]-L-cysteine + [acceptor protein]-L-lysine = [E2 ubiquitin-conjugating enzyme]-L-cysteine + N(6)-ubiquitinyl-[acceptor protein]-L-lysine.</text>
        <dbReference type="EC" id="2.3.2.27"/>
    </reaction>
</comment>
<comment type="pathway">
    <text>Protein modification; protein ubiquitination.</text>
</comment>
<comment type="subcellular location">
    <subcellularLocation>
        <location evidence="6">Membrane</location>
        <topology evidence="6">Single-pass membrane protein</topology>
    </subcellularLocation>
</comment>
<comment type="induction">
    <text evidence="5">Up-regulated by chitin.</text>
</comment>
<comment type="domain">
    <text evidence="1">The RING-type zinc finger domain mediates binding to an E2 ubiquitin-conjugating enzyme.</text>
</comment>
<comment type="similarity">
    <text evidence="6">Belongs to the RING-type zinc finger family. ATL subfamily.</text>
</comment>
<keyword id="KW-0472">Membrane</keyword>
<keyword id="KW-0479">Metal-binding</keyword>
<keyword id="KW-1185">Reference proteome</keyword>
<keyword id="KW-0808">Transferase</keyword>
<keyword id="KW-0812">Transmembrane</keyword>
<keyword id="KW-1133">Transmembrane helix</keyword>
<keyword id="KW-0833">Ubl conjugation pathway</keyword>
<keyword id="KW-0862">Zinc</keyword>
<keyword id="KW-0863">Zinc-finger</keyword>
<proteinExistence type="evidence at transcript level"/>
<evidence type="ECO:0000250" key="1"/>
<evidence type="ECO:0000255" key="2"/>
<evidence type="ECO:0000255" key="3">
    <source>
        <dbReference type="PROSITE-ProRule" id="PRU00175"/>
    </source>
</evidence>
<evidence type="ECO:0000256" key="4">
    <source>
        <dbReference type="SAM" id="MobiDB-lite"/>
    </source>
</evidence>
<evidence type="ECO:0000269" key="5">
    <source>
    </source>
</evidence>
<evidence type="ECO:0000305" key="6"/>
<protein>
    <recommendedName>
        <fullName>RING-H2 finger protein ATL14</fullName>
        <ecNumber evidence="6">2.3.2.27</ecNumber>
    </recommendedName>
    <alternativeName>
        <fullName evidence="6">RING-type E3 ubiquitin transferase ATL14</fullName>
    </alternativeName>
</protein>
<gene>
    <name type="primary">ATL14</name>
    <name type="ordered locus">At4g30370</name>
    <name type="ORF">F17I23.290</name>
</gene>
<sequence length="176" mass="20767">MSITIPYDGSISREPSPSPPPPKANTKNLPTKILSNFLIGLIMIPVAITAFIFILTSLGFTFFFAFYWFLQRNYRHRLRRHRRHEYSDGLSPRCVKRLPQFKYCEPSSEYGGDDCVVCIDGFRQGQWCRKLPRCGHVFHRKCVDLWLIKVSTCPICRDRVYRFEEGRRWRPQGEIF</sequence>
<organism>
    <name type="scientific">Arabidopsis thaliana</name>
    <name type="common">Mouse-ear cress</name>
    <dbReference type="NCBI Taxonomy" id="3702"/>
    <lineage>
        <taxon>Eukaryota</taxon>
        <taxon>Viridiplantae</taxon>
        <taxon>Streptophyta</taxon>
        <taxon>Embryophyta</taxon>
        <taxon>Tracheophyta</taxon>
        <taxon>Spermatophyta</taxon>
        <taxon>Magnoliopsida</taxon>
        <taxon>eudicotyledons</taxon>
        <taxon>Gunneridae</taxon>
        <taxon>Pentapetalae</taxon>
        <taxon>rosids</taxon>
        <taxon>malvids</taxon>
        <taxon>Brassicales</taxon>
        <taxon>Brassicaceae</taxon>
        <taxon>Camelineae</taxon>
        <taxon>Arabidopsis</taxon>
    </lineage>
</organism>
<reference key="1">
    <citation type="journal article" date="1999" name="Nature">
        <title>Sequence and analysis of chromosome 4 of the plant Arabidopsis thaliana.</title>
        <authorList>
            <person name="Mayer K.F.X."/>
            <person name="Schueller C."/>
            <person name="Wambutt R."/>
            <person name="Murphy G."/>
            <person name="Volckaert G."/>
            <person name="Pohl T."/>
            <person name="Duesterhoeft A."/>
            <person name="Stiekema W."/>
            <person name="Entian K.-D."/>
            <person name="Terryn N."/>
            <person name="Harris B."/>
            <person name="Ansorge W."/>
            <person name="Brandt P."/>
            <person name="Grivell L.A."/>
            <person name="Rieger M."/>
            <person name="Weichselgartner M."/>
            <person name="de Simone V."/>
            <person name="Obermaier B."/>
            <person name="Mache R."/>
            <person name="Mueller M."/>
            <person name="Kreis M."/>
            <person name="Delseny M."/>
            <person name="Puigdomenech P."/>
            <person name="Watson M."/>
            <person name="Schmidtheini T."/>
            <person name="Reichert B."/>
            <person name="Portetelle D."/>
            <person name="Perez-Alonso M."/>
            <person name="Boutry M."/>
            <person name="Bancroft I."/>
            <person name="Vos P."/>
            <person name="Hoheisel J."/>
            <person name="Zimmermann W."/>
            <person name="Wedler H."/>
            <person name="Ridley P."/>
            <person name="Langham S.-A."/>
            <person name="McCullagh B."/>
            <person name="Bilham L."/>
            <person name="Robben J."/>
            <person name="van der Schueren J."/>
            <person name="Grymonprez B."/>
            <person name="Chuang Y.-J."/>
            <person name="Vandenbussche F."/>
            <person name="Braeken M."/>
            <person name="Weltjens I."/>
            <person name="Voet M."/>
            <person name="Bastiaens I."/>
            <person name="Aert R."/>
            <person name="Defoor E."/>
            <person name="Weitzenegger T."/>
            <person name="Bothe G."/>
            <person name="Ramsperger U."/>
            <person name="Hilbert H."/>
            <person name="Braun M."/>
            <person name="Holzer E."/>
            <person name="Brandt A."/>
            <person name="Peters S."/>
            <person name="van Staveren M."/>
            <person name="Dirkse W."/>
            <person name="Mooijman P."/>
            <person name="Klein Lankhorst R."/>
            <person name="Rose M."/>
            <person name="Hauf J."/>
            <person name="Koetter P."/>
            <person name="Berneiser S."/>
            <person name="Hempel S."/>
            <person name="Feldpausch M."/>
            <person name="Lamberth S."/>
            <person name="Van den Daele H."/>
            <person name="De Keyser A."/>
            <person name="Buysshaert C."/>
            <person name="Gielen J."/>
            <person name="Villarroel R."/>
            <person name="De Clercq R."/>
            <person name="van Montagu M."/>
            <person name="Rogers J."/>
            <person name="Cronin A."/>
            <person name="Quail M.A."/>
            <person name="Bray-Allen S."/>
            <person name="Clark L."/>
            <person name="Doggett J."/>
            <person name="Hall S."/>
            <person name="Kay M."/>
            <person name="Lennard N."/>
            <person name="McLay K."/>
            <person name="Mayes R."/>
            <person name="Pettett A."/>
            <person name="Rajandream M.A."/>
            <person name="Lyne M."/>
            <person name="Benes V."/>
            <person name="Rechmann S."/>
            <person name="Borkova D."/>
            <person name="Bloecker H."/>
            <person name="Scharfe M."/>
            <person name="Grimm M."/>
            <person name="Loehnert T.-H."/>
            <person name="Dose S."/>
            <person name="de Haan M."/>
            <person name="Maarse A.C."/>
            <person name="Schaefer M."/>
            <person name="Mueller-Auer S."/>
            <person name="Gabel C."/>
            <person name="Fuchs M."/>
            <person name="Fartmann B."/>
            <person name="Granderath K."/>
            <person name="Dauner D."/>
            <person name="Herzl A."/>
            <person name="Neumann S."/>
            <person name="Argiriou A."/>
            <person name="Vitale D."/>
            <person name="Liguori R."/>
            <person name="Piravandi E."/>
            <person name="Massenet O."/>
            <person name="Quigley F."/>
            <person name="Clabauld G."/>
            <person name="Muendlein A."/>
            <person name="Felber R."/>
            <person name="Schnabl S."/>
            <person name="Hiller R."/>
            <person name="Schmidt W."/>
            <person name="Lecharny A."/>
            <person name="Aubourg S."/>
            <person name="Chefdor F."/>
            <person name="Cooke R."/>
            <person name="Berger C."/>
            <person name="Monfort A."/>
            <person name="Casacuberta E."/>
            <person name="Gibbons T."/>
            <person name="Weber N."/>
            <person name="Vandenbol M."/>
            <person name="Bargues M."/>
            <person name="Terol J."/>
            <person name="Torres A."/>
            <person name="Perez-Perez A."/>
            <person name="Purnelle B."/>
            <person name="Bent E."/>
            <person name="Johnson S."/>
            <person name="Tacon D."/>
            <person name="Jesse T."/>
            <person name="Heijnen L."/>
            <person name="Schwarz S."/>
            <person name="Scholler P."/>
            <person name="Heber S."/>
            <person name="Francs P."/>
            <person name="Bielke C."/>
            <person name="Frishman D."/>
            <person name="Haase D."/>
            <person name="Lemcke K."/>
            <person name="Mewes H.-W."/>
            <person name="Stocker S."/>
            <person name="Zaccaria P."/>
            <person name="Bevan M."/>
            <person name="Wilson R.K."/>
            <person name="de la Bastide M."/>
            <person name="Habermann K."/>
            <person name="Parnell L."/>
            <person name="Dedhia N."/>
            <person name="Gnoj L."/>
            <person name="Schutz K."/>
            <person name="Huang E."/>
            <person name="Spiegel L."/>
            <person name="Sekhon M."/>
            <person name="Murray J."/>
            <person name="Sheet P."/>
            <person name="Cordes M."/>
            <person name="Abu-Threideh J."/>
            <person name="Stoneking T."/>
            <person name="Kalicki J."/>
            <person name="Graves T."/>
            <person name="Harmon G."/>
            <person name="Edwards J."/>
            <person name="Latreille P."/>
            <person name="Courtney L."/>
            <person name="Cloud J."/>
            <person name="Abbott A."/>
            <person name="Scott K."/>
            <person name="Johnson D."/>
            <person name="Minx P."/>
            <person name="Bentley D."/>
            <person name="Fulton B."/>
            <person name="Miller N."/>
            <person name="Greco T."/>
            <person name="Kemp K."/>
            <person name="Kramer J."/>
            <person name="Fulton L."/>
            <person name="Mardis E."/>
            <person name="Dante M."/>
            <person name="Pepin K."/>
            <person name="Hillier L.W."/>
            <person name="Nelson J."/>
            <person name="Spieth J."/>
            <person name="Ryan E."/>
            <person name="Andrews S."/>
            <person name="Geisel C."/>
            <person name="Layman D."/>
            <person name="Du H."/>
            <person name="Ali J."/>
            <person name="Berghoff A."/>
            <person name="Jones K."/>
            <person name="Drone K."/>
            <person name="Cotton M."/>
            <person name="Joshu C."/>
            <person name="Antonoiu B."/>
            <person name="Zidanic M."/>
            <person name="Strong C."/>
            <person name="Sun H."/>
            <person name="Lamar B."/>
            <person name="Yordan C."/>
            <person name="Ma P."/>
            <person name="Zhong J."/>
            <person name="Preston R."/>
            <person name="Vil D."/>
            <person name="Shekher M."/>
            <person name="Matero A."/>
            <person name="Shah R."/>
            <person name="Swaby I.K."/>
            <person name="O'Shaughnessy A."/>
            <person name="Rodriguez M."/>
            <person name="Hoffman J."/>
            <person name="Till S."/>
            <person name="Granat S."/>
            <person name="Shohdy N."/>
            <person name="Hasegawa A."/>
            <person name="Hameed A."/>
            <person name="Lodhi M."/>
            <person name="Johnson A."/>
            <person name="Chen E."/>
            <person name="Marra M.A."/>
            <person name="Martienssen R."/>
            <person name="McCombie W.R."/>
        </authorList>
    </citation>
    <scope>NUCLEOTIDE SEQUENCE [LARGE SCALE GENOMIC DNA]</scope>
    <source>
        <strain>cv. Columbia</strain>
    </source>
</reference>
<reference key="2">
    <citation type="journal article" date="2017" name="Plant J.">
        <title>Araport11: a complete reannotation of the Arabidopsis thaliana reference genome.</title>
        <authorList>
            <person name="Cheng C.Y."/>
            <person name="Krishnakumar V."/>
            <person name="Chan A.P."/>
            <person name="Thibaud-Nissen F."/>
            <person name="Schobel S."/>
            <person name="Town C.D."/>
        </authorList>
    </citation>
    <scope>GENOME REANNOTATION</scope>
    <source>
        <strain>cv. Columbia</strain>
    </source>
</reference>
<reference key="3">
    <citation type="journal article" date="2002" name="Science">
        <title>Functional annotation of a full-length Arabidopsis cDNA collection.</title>
        <authorList>
            <person name="Seki M."/>
            <person name="Narusaka M."/>
            <person name="Kamiya A."/>
            <person name="Ishida J."/>
            <person name="Satou M."/>
            <person name="Sakurai T."/>
            <person name="Nakajima M."/>
            <person name="Enju A."/>
            <person name="Akiyama K."/>
            <person name="Oono Y."/>
            <person name="Muramatsu M."/>
            <person name="Hayashizaki Y."/>
            <person name="Kawai J."/>
            <person name="Carninci P."/>
            <person name="Itoh M."/>
            <person name="Ishii Y."/>
            <person name="Arakawa T."/>
            <person name="Shibata K."/>
            <person name="Shinagawa A."/>
            <person name="Shinozaki K."/>
        </authorList>
    </citation>
    <scope>NUCLEOTIDE SEQUENCE [LARGE SCALE MRNA]</scope>
    <source>
        <strain>cv. Columbia</strain>
    </source>
</reference>
<reference key="4">
    <citation type="journal article" date="2003" name="Science">
        <title>Empirical analysis of transcriptional activity in the Arabidopsis genome.</title>
        <authorList>
            <person name="Yamada K."/>
            <person name="Lim J."/>
            <person name="Dale J.M."/>
            <person name="Chen H."/>
            <person name="Shinn P."/>
            <person name="Palm C.J."/>
            <person name="Southwick A.M."/>
            <person name="Wu H.C."/>
            <person name="Kim C.J."/>
            <person name="Nguyen M."/>
            <person name="Pham P.K."/>
            <person name="Cheuk R.F."/>
            <person name="Karlin-Newmann G."/>
            <person name="Liu S.X."/>
            <person name="Lam B."/>
            <person name="Sakano H."/>
            <person name="Wu T."/>
            <person name="Yu G."/>
            <person name="Miranda M."/>
            <person name="Quach H.L."/>
            <person name="Tripp M."/>
            <person name="Chang C.H."/>
            <person name="Lee J.M."/>
            <person name="Toriumi M.J."/>
            <person name="Chan M.M."/>
            <person name="Tang C.C."/>
            <person name="Onodera C.S."/>
            <person name="Deng J.M."/>
            <person name="Akiyama K."/>
            <person name="Ansari Y."/>
            <person name="Arakawa T."/>
            <person name="Banh J."/>
            <person name="Banno F."/>
            <person name="Bowser L."/>
            <person name="Brooks S.Y."/>
            <person name="Carninci P."/>
            <person name="Chao Q."/>
            <person name="Choy N."/>
            <person name="Enju A."/>
            <person name="Goldsmith A.D."/>
            <person name="Gurjal M."/>
            <person name="Hansen N.F."/>
            <person name="Hayashizaki Y."/>
            <person name="Johnson-Hopson C."/>
            <person name="Hsuan V.W."/>
            <person name="Iida K."/>
            <person name="Karnes M."/>
            <person name="Khan S."/>
            <person name="Koesema E."/>
            <person name="Ishida J."/>
            <person name="Jiang P.X."/>
            <person name="Jones T."/>
            <person name="Kawai J."/>
            <person name="Kamiya A."/>
            <person name="Meyers C."/>
            <person name="Nakajima M."/>
            <person name="Narusaka M."/>
            <person name="Seki M."/>
            <person name="Sakurai T."/>
            <person name="Satou M."/>
            <person name="Tamse R."/>
            <person name="Vaysberg M."/>
            <person name="Wallender E.K."/>
            <person name="Wong C."/>
            <person name="Yamamura Y."/>
            <person name="Yuan S."/>
            <person name="Shinozaki K."/>
            <person name="Davis R.W."/>
            <person name="Theologis A."/>
            <person name="Ecker J.R."/>
        </authorList>
    </citation>
    <scope>NUCLEOTIDE SEQUENCE [LARGE SCALE MRNA]</scope>
    <source>
        <strain>cv. Columbia</strain>
    </source>
</reference>
<reference key="5">
    <citation type="journal article" date="2002" name="Genome Biol.">
        <title>Evaluation and classification of RING-finger domains encoded by the Arabidopsis genome.</title>
        <authorList>
            <person name="Kosarev P."/>
            <person name="Mayer K.F.X."/>
            <person name="Hardtke C.S."/>
        </authorList>
    </citation>
    <scope>GENE FAMILY ORGANIZATION</scope>
</reference>
<reference key="6">
    <citation type="journal article" date="2004" name="Genetics">
        <title>Isolation and gene expression analysis of Arabidopsis thaliana mutants with constitutive expression of ATL2, an early elicitor-response RING-H2 zinc-finger gene.</title>
        <authorList>
            <person name="Serrano M."/>
            <person name="Guzman P."/>
        </authorList>
    </citation>
    <scope>IDENTIFICATION</scope>
</reference>
<reference key="7">
    <citation type="journal article" date="2006" name="J. Mol. Evol.">
        <title>The ATL gene family from Arabidopsis thaliana and Oryza sativa comprises a large number of putative ubiquitin ligases of the RING-H2 type.</title>
        <authorList>
            <person name="Serrano M."/>
            <person name="Parra S."/>
            <person name="Alcaraz L.D."/>
            <person name="Guzman P."/>
        </authorList>
    </citation>
    <scope>NOMENCLATURE</scope>
    <scope>GENE FAMILY ORGANIZATION</scope>
</reference>
<reference key="8">
    <citation type="journal article" date="2007" name="Mol. Plant Microbe Interact.">
        <title>Identification of 118 Arabidopsis transcription factor and 30 ubiquitin-ligase genes responding to chitin, a plant-defense elicitor.</title>
        <authorList>
            <person name="Libault M."/>
            <person name="Wan J."/>
            <person name="Czechowski T."/>
            <person name="Udvardi M."/>
            <person name="Stacey G."/>
        </authorList>
    </citation>
    <scope>INDUCTION BY CHITIN</scope>
</reference>
<dbReference type="EC" id="2.3.2.27" evidence="6"/>
<dbReference type="EMBL" id="AF160182">
    <property type="status" value="NOT_ANNOTATED_CDS"/>
    <property type="molecule type" value="Genomic_DNA"/>
</dbReference>
<dbReference type="EMBL" id="AL161576">
    <property type="protein sequence ID" value="CAB81030.1"/>
    <property type="molecule type" value="Genomic_DNA"/>
</dbReference>
<dbReference type="EMBL" id="CP002687">
    <property type="protein sequence ID" value="AEE85757.1"/>
    <property type="molecule type" value="Genomic_DNA"/>
</dbReference>
<dbReference type="EMBL" id="AK118932">
    <property type="protein sequence ID" value="BAC43513.1"/>
    <property type="molecule type" value="mRNA"/>
</dbReference>
<dbReference type="EMBL" id="BT005549">
    <property type="protein sequence ID" value="AAO63969.1"/>
    <property type="molecule type" value="mRNA"/>
</dbReference>
<dbReference type="PIR" id="B85355">
    <property type="entry name" value="B85355"/>
</dbReference>
<dbReference type="RefSeq" id="NP_194766.1">
    <property type="nucleotide sequence ID" value="NM_119183.3"/>
</dbReference>
<dbReference type="SMR" id="Q9M0C3"/>
<dbReference type="BioGRID" id="14447">
    <property type="interactions" value="3"/>
</dbReference>
<dbReference type="STRING" id="3702.Q9M0C3"/>
<dbReference type="PaxDb" id="3702-AT4G30370.1"/>
<dbReference type="EnsemblPlants" id="AT4G30370.1">
    <property type="protein sequence ID" value="AT4G30370.1"/>
    <property type="gene ID" value="AT4G30370"/>
</dbReference>
<dbReference type="GeneID" id="829160"/>
<dbReference type="Gramene" id="AT4G30370.1">
    <property type="protein sequence ID" value="AT4G30370.1"/>
    <property type="gene ID" value="AT4G30370"/>
</dbReference>
<dbReference type="KEGG" id="ath:AT4G30370"/>
<dbReference type="Araport" id="AT4G30370"/>
<dbReference type="TAIR" id="AT4G30370">
    <property type="gene designation" value="IDF1"/>
</dbReference>
<dbReference type="eggNOG" id="KOG0800">
    <property type="taxonomic scope" value="Eukaryota"/>
</dbReference>
<dbReference type="HOGENOM" id="CLU_013137_15_5_1"/>
<dbReference type="InParanoid" id="Q9M0C3"/>
<dbReference type="OMA" id="QFKFCEP"/>
<dbReference type="OrthoDB" id="8062037at2759"/>
<dbReference type="PhylomeDB" id="Q9M0C3"/>
<dbReference type="UniPathway" id="UPA00143"/>
<dbReference type="PRO" id="PR:Q9M0C3"/>
<dbReference type="Proteomes" id="UP000006548">
    <property type="component" value="Chromosome 4"/>
</dbReference>
<dbReference type="ExpressionAtlas" id="Q9M0C3">
    <property type="expression patterns" value="baseline and differential"/>
</dbReference>
<dbReference type="GO" id="GO:0016020">
    <property type="term" value="C:membrane"/>
    <property type="evidence" value="ECO:0007669"/>
    <property type="project" value="UniProtKB-SubCell"/>
</dbReference>
<dbReference type="GO" id="GO:0016740">
    <property type="term" value="F:transferase activity"/>
    <property type="evidence" value="ECO:0007669"/>
    <property type="project" value="UniProtKB-KW"/>
</dbReference>
<dbReference type="GO" id="GO:0008270">
    <property type="term" value="F:zinc ion binding"/>
    <property type="evidence" value="ECO:0007669"/>
    <property type="project" value="UniProtKB-KW"/>
</dbReference>
<dbReference type="GO" id="GO:0071456">
    <property type="term" value="P:cellular response to hypoxia"/>
    <property type="evidence" value="ECO:0007007"/>
    <property type="project" value="TAIR"/>
</dbReference>
<dbReference type="GO" id="GO:0016567">
    <property type="term" value="P:protein ubiquitination"/>
    <property type="evidence" value="ECO:0007669"/>
    <property type="project" value="UniProtKB-UniPathway"/>
</dbReference>
<dbReference type="Gene3D" id="3.30.40.10">
    <property type="entry name" value="Zinc/RING finger domain, C3HC4 (zinc finger)"/>
    <property type="match status" value="1"/>
</dbReference>
<dbReference type="InterPro" id="IPR001841">
    <property type="entry name" value="Znf_RING"/>
</dbReference>
<dbReference type="InterPro" id="IPR013083">
    <property type="entry name" value="Znf_RING/FYVE/PHD"/>
</dbReference>
<dbReference type="PANTHER" id="PTHR46539">
    <property type="entry name" value="E3 UBIQUITIN-PROTEIN LIGASE ATL42"/>
    <property type="match status" value="1"/>
</dbReference>
<dbReference type="PANTHER" id="PTHR46539:SF6">
    <property type="entry name" value="RING-H2 FINGER PROTEIN ATL14"/>
    <property type="match status" value="1"/>
</dbReference>
<dbReference type="Pfam" id="PF13639">
    <property type="entry name" value="zf-RING_2"/>
    <property type="match status" value="1"/>
</dbReference>
<dbReference type="SMART" id="SM00184">
    <property type="entry name" value="RING"/>
    <property type="match status" value="1"/>
</dbReference>
<dbReference type="SUPFAM" id="SSF57850">
    <property type="entry name" value="RING/U-box"/>
    <property type="match status" value="1"/>
</dbReference>
<dbReference type="PROSITE" id="PS50089">
    <property type="entry name" value="ZF_RING_2"/>
    <property type="match status" value="1"/>
</dbReference>
<accession>Q9M0C3</accession>
<feature type="chain" id="PRO_0000396118" description="RING-H2 finger protein ATL14">
    <location>
        <begin position="1"/>
        <end position="176"/>
    </location>
</feature>
<feature type="transmembrane region" description="Helical" evidence="2">
    <location>
        <begin position="37"/>
        <end position="57"/>
    </location>
</feature>
<feature type="zinc finger region" description="RING-type; atypical" evidence="3">
    <location>
        <begin position="115"/>
        <end position="157"/>
    </location>
</feature>
<feature type="region of interest" description="Disordered" evidence="4">
    <location>
        <begin position="1"/>
        <end position="26"/>
    </location>
</feature>
<name>ATL14_ARATH</name>